<protein>
    <recommendedName>
        <fullName>Mediator of RNA polymerase II transcription subunit 6</fullName>
    </recommendedName>
    <alternativeName>
        <fullName>Mediator complex subunit 6</fullName>
    </alternativeName>
</protein>
<dbReference type="EMBL" id="CR382139">
    <property type="protein sequence ID" value="CAG90468.2"/>
    <property type="molecule type" value="Genomic_DNA"/>
</dbReference>
<dbReference type="RefSeq" id="XP_461994.2">
    <property type="nucleotide sequence ID" value="XM_461994.1"/>
</dbReference>
<dbReference type="SMR" id="Q6BIH7"/>
<dbReference type="FunCoup" id="Q6BIH7">
    <property type="interactions" value="865"/>
</dbReference>
<dbReference type="STRING" id="284592.Q6BIH7"/>
<dbReference type="GeneID" id="2904891"/>
<dbReference type="KEGG" id="dha:DEHA2G10318g"/>
<dbReference type="VEuPathDB" id="FungiDB:DEHA2G10318g"/>
<dbReference type="eggNOG" id="KOG3169">
    <property type="taxonomic scope" value="Eukaryota"/>
</dbReference>
<dbReference type="HOGENOM" id="CLU_077754_0_1_1"/>
<dbReference type="InParanoid" id="Q6BIH7"/>
<dbReference type="OMA" id="MQRQFSQ"/>
<dbReference type="OrthoDB" id="344220at2759"/>
<dbReference type="Proteomes" id="UP000000599">
    <property type="component" value="Chromosome G"/>
</dbReference>
<dbReference type="GO" id="GO:0070847">
    <property type="term" value="C:core mediator complex"/>
    <property type="evidence" value="ECO:0007669"/>
    <property type="project" value="EnsemblFungi"/>
</dbReference>
<dbReference type="GO" id="GO:0016592">
    <property type="term" value="C:mediator complex"/>
    <property type="evidence" value="ECO:0007669"/>
    <property type="project" value="InterPro"/>
</dbReference>
<dbReference type="GO" id="GO:0003713">
    <property type="term" value="F:transcription coactivator activity"/>
    <property type="evidence" value="ECO:0007669"/>
    <property type="project" value="EnsemblFungi"/>
</dbReference>
<dbReference type="GO" id="GO:0032968">
    <property type="term" value="P:positive regulation of transcription elongation by RNA polymerase II"/>
    <property type="evidence" value="ECO:0007669"/>
    <property type="project" value="EnsemblFungi"/>
</dbReference>
<dbReference type="GO" id="GO:0060261">
    <property type="term" value="P:positive regulation of transcription initiation by RNA polymerase II"/>
    <property type="evidence" value="ECO:0007669"/>
    <property type="project" value="EnsemblFungi"/>
</dbReference>
<dbReference type="GO" id="GO:0051123">
    <property type="term" value="P:RNA polymerase II preinitiation complex assembly"/>
    <property type="evidence" value="ECO:0007669"/>
    <property type="project" value="EnsemblFungi"/>
</dbReference>
<dbReference type="FunFam" id="3.10.450.580:FF:000004">
    <property type="entry name" value="Mediator of RNA polymerase II transcription subunit 6"/>
    <property type="match status" value="1"/>
</dbReference>
<dbReference type="Gene3D" id="3.10.450.580">
    <property type="entry name" value="Mediator complex, subunit Med6"/>
    <property type="match status" value="1"/>
</dbReference>
<dbReference type="InterPro" id="IPR007018">
    <property type="entry name" value="Mediator_Med6"/>
</dbReference>
<dbReference type="InterPro" id="IPR016612">
    <property type="entry name" value="Mediator_Med6_fun"/>
</dbReference>
<dbReference type="InterPro" id="IPR038566">
    <property type="entry name" value="Mediator_Med6_sf"/>
</dbReference>
<dbReference type="PANTHER" id="PTHR13104">
    <property type="entry name" value="MED-6-RELATED"/>
    <property type="match status" value="1"/>
</dbReference>
<dbReference type="Pfam" id="PF04934">
    <property type="entry name" value="Med6"/>
    <property type="match status" value="1"/>
</dbReference>
<dbReference type="PIRSF" id="PIRSF013286">
    <property type="entry name" value="MED6_fungi"/>
    <property type="match status" value="1"/>
</dbReference>
<sequence>MSKEPLDEIQWKNPEWIQQFGLFTGNVLDYFSESPFYDRTSNNQVLRMQFQFQQIPPNINPQKYLQSKLVEMTGIEFIIAASREPDFWIIRKQTRLSPKQVNIEQDYYIIGANIYQAPKVYDILSSRLLSSVLSIKGSMELLNKMSKFNIHDMGHSYPTLQAEKEISSSSNTIPNTVSVNTTTPMLHTPATASNINSNGHSSTNLGLNNEISNLAFDNLLNNVINSSNDDTYLEDIPLYGKGSTVESLGVKVNLDDV</sequence>
<evidence type="ECO:0000250" key="1"/>
<evidence type="ECO:0000305" key="2"/>
<keyword id="KW-0010">Activator</keyword>
<keyword id="KW-0539">Nucleus</keyword>
<keyword id="KW-1185">Reference proteome</keyword>
<keyword id="KW-0804">Transcription</keyword>
<keyword id="KW-0805">Transcription regulation</keyword>
<comment type="function">
    <text evidence="1">Component of the Mediator complex, a coactivator involved in the regulated transcription of nearly all RNA polymerase II-dependent genes. Mediator functions as a bridge to convey information from gene-specific regulatory proteins to the basal RNA polymerase II transcription machinery. Mediator is recruited to promoters by direct interactions with regulatory proteins and serves as a scaffold for the assembly of a functional preinitiation complex with RNA polymerase II and the general transcription factors (By similarity).</text>
</comment>
<comment type="subunit">
    <text evidence="1">Component of the Mediator complex.</text>
</comment>
<comment type="subcellular location">
    <subcellularLocation>
        <location evidence="1">Nucleus</location>
    </subcellularLocation>
</comment>
<comment type="similarity">
    <text evidence="2">Belongs to the Mediator complex subunit 6 family.</text>
</comment>
<name>MED6_DEBHA</name>
<feature type="chain" id="PRO_0000303057" description="Mediator of RNA polymerase II transcription subunit 6">
    <location>
        <begin position="1"/>
        <end position="257"/>
    </location>
</feature>
<organism>
    <name type="scientific">Debaryomyces hansenii (strain ATCC 36239 / CBS 767 / BCRC 21394 / JCM 1990 / NBRC 0083 / IGC 2968)</name>
    <name type="common">Yeast</name>
    <name type="synonym">Torulaspora hansenii</name>
    <dbReference type="NCBI Taxonomy" id="284592"/>
    <lineage>
        <taxon>Eukaryota</taxon>
        <taxon>Fungi</taxon>
        <taxon>Dikarya</taxon>
        <taxon>Ascomycota</taxon>
        <taxon>Saccharomycotina</taxon>
        <taxon>Pichiomycetes</taxon>
        <taxon>Debaryomycetaceae</taxon>
        <taxon>Debaryomyces</taxon>
    </lineage>
</organism>
<accession>Q6BIH7</accession>
<proteinExistence type="inferred from homology"/>
<reference key="1">
    <citation type="journal article" date="2004" name="Nature">
        <title>Genome evolution in yeasts.</title>
        <authorList>
            <person name="Dujon B."/>
            <person name="Sherman D."/>
            <person name="Fischer G."/>
            <person name="Durrens P."/>
            <person name="Casaregola S."/>
            <person name="Lafontaine I."/>
            <person name="de Montigny J."/>
            <person name="Marck C."/>
            <person name="Neuveglise C."/>
            <person name="Talla E."/>
            <person name="Goffard N."/>
            <person name="Frangeul L."/>
            <person name="Aigle M."/>
            <person name="Anthouard V."/>
            <person name="Babour A."/>
            <person name="Barbe V."/>
            <person name="Barnay S."/>
            <person name="Blanchin S."/>
            <person name="Beckerich J.-M."/>
            <person name="Beyne E."/>
            <person name="Bleykasten C."/>
            <person name="Boisrame A."/>
            <person name="Boyer J."/>
            <person name="Cattolico L."/>
            <person name="Confanioleri F."/>
            <person name="de Daruvar A."/>
            <person name="Despons L."/>
            <person name="Fabre E."/>
            <person name="Fairhead C."/>
            <person name="Ferry-Dumazet H."/>
            <person name="Groppi A."/>
            <person name="Hantraye F."/>
            <person name="Hennequin C."/>
            <person name="Jauniaux N."/>
            <person name="Joyet P."/>
            <person name="Kachouri R."/>
            <person name="Kerrest A."/>
            <person name="Koszul R."/>
            <person name="Lemaire M."/>
            <person name="Lesur I."/>
            <person name="Ma L."/>
            <person name="Muller H."/>
            <person name="Nicaud J.-M."/>
            <person name="Nikolski M."/>
            <person name="Oztas S."/>
            <person name="Ozier-Kalogeropoulos O."/>
            <person name="Pellenz S."/>
            <person name="Potier S."/>
            <person name="Richard G.-F."/>
            <person name="Straub M.-L."/>
            <person name="Suleau A."/>
            <person name="Swennen D."/>
            <person name="Tekaia F."/>
            <person name="Wesolowski-Louvel M."/>
            <person name="Westhof E."/>
            <person name="Wirth B."/>
            <person name="Zeniou-Meyer M."/>
            <person name="Zivanovic Y."/>
            <person name="Bolotin-Fukuhara M."/>
            <person name="Thierry A."/>
            <person name="Bouchier C."/>
            <person name="Caudron B."/>
            <person name="Scarpelli C."/>
            <person name="Gaillardin C."/>
            <person name="Weissenbach J."/>
            <person name="Wincker P."/>
            <person name="Souciet J.-L."/>
        </authorList>
    </citation>
    <scope>NUCLEOTIDE SEQUENCE [LARGE SCALE GENOMIC DNA]</scope>
    <source>
        <strain>ATCC 36239 / CBS 767 / BCRC 21394 / JCM 1990 / NBRC 0083 / IGC 2968</strain>
    </source>
</reference>
<gene>
    <name type="primary">MED6</name>
    <name type="ordered locus">DEHA2G10318g</name>
</gene>